<keyword id="KW-0032">Aminotransferase</keyword>
<keyword id="KW-0496">Mitochondrion</keyword>
<keyword id="KW-0663">Pyridoxal phosphate</keyword>
<keyword id="KW-1185">Reference proteome</keyword>
<keyword id="KW-0808">Transferase</keyword>
<keyword id="KW-0809">Transit peptide</keyword>
<proteinExistence type="inferred from homology"/>
<dbReference type="EC" id="2.6.1.96"/>
<dbReference type="EMBL" id="CR855154">
    <property type="protein sequence ID" value="CAH66914.1"/>
    <property type="molecule type" value="Genomic_DNA"/>
</dbReference>
<dbReference type="EMBL" id="CM000129">
    <property type="protein sequence ID" value="EEC77995.1"/>
    <property type="status" value="ALT_SEQ"/>
    <property type="molecule type" value="Genomic_DNA"/>
</dbReference>
<dbReference type="SMR" id="Q01K11"/>
<dbReference type="STRING" id="39946.Q01K11"/>
<dbReference type="EnsemblPlants" id="OsGoSa_04g0026030.02">
    <property type="protein sequence ID" value="OsGoSa_04g0026030.02"/>
    <property type="gene ID" value="OsGoSa_04g0026030"/>
</dbReference>
<dbReference type="EnsemblPlants" id="OsIR64_04g0025740.02">
    <property type="protein sequence ID" value="OsIR64_04g0025740.02"/>
    <property type="gene ID" value="OsIR64_04g0025740"/>
</dbReference>
<dbReference type="EnsemblPlants" id="OsLima_04g0026170.02">
    <property type="protein sequence ID" value="OsLima_04g0026170.02"/>
    <property type="gene ID" value="OsLima_04g0026170"/>
</dbReference>
<dbReference type="EnsemblPlants" id="OsLiXu_04g0026490.03">
    <property type="protein sequence ID" value="OsLiXu_04g0026490.03"/>
    <property type="gene ID" value="OsLiXu_04g0026490"/>
</dbReference>
<dbReference type="Gramene" id="OsGoSa_04g0026030.02">
    <property type="protein sequence ID" value="OsGoSa_04g0026030.02"/>
    <property type="gene ID" value="OsGoSa_04g0026030"/>
</dbReference>
<dbReference type="Gramene" id="OsIR64_04g0025740.02">
    <property type="protein sequence ID" value="OsIR64_04g0025740.02"/>
    <property type="gene ID" value="OsIR64_04g0025740"/>
</dbReference>
<dbReference type="Gramene" id="OsLima_04g0026170.02">
    <property type="protein sequence ID" value="OsLima_04g0026170.02"/>
    <property type="gene ID" value="OsLima_04g0026170"/>
</dbReference>
<dbReference type="Gramene" id="OsLiXu_04g0026490.03">
    <property type="protein sequence ID" value="OsLiXu_04g0026490.03"/>
    <property type="gene ID" value="OsLiXu_04g0026490"/>
</dbReference>
<dbReference type="HOGENOM" id="CLU_016922_4_1_1"/>
<dbReference type="OrthoDB" id="425114at2759"/>
<dbReference type="Proteomes" id="UP000007015">
    <property type="component" value="Chromosome 4"/>
</dbReference>
<dbReference type="GO" id="GO:0005739">
    <property type="term" value="C:mitochondrion"/>
    <property type="evidence" value="ECO:0007669"/>
    <property type="project" value="UniProtKB-SubCell"/>
</dbReference>
<dbReference type="GO" id="GO:0034387">
    <property type="term" value="F:4-aminobutyrate:pyruvate transaminase activity"/>
    <property type="evidence" value="ECO:0007669"/>
    <property type="project" value="UniProtKB-EC"/>
</dbReference>
<dbReference type="GO" id="GO:0004015">
    <property type="term" value="F:adenosylmethionine-8-amino-7-oxononanoate transaminase activity"/>
    <property type="evidence" value="ECO:0007669"/>
    <property type="project" value="TreeGrafter"/>
</dbReference>
<dbReference type="GO" id="GO:0030170">
    <property type="term" value="F:pyridoxal phosphate binding"/>
    <property type="evidence" value="ECO:0007669"/>
    <property type="project" value="InterPro"/>
</dbReference>
<dbReference type="GO" id="GO:0009102">
    <property type="term" value="P:biotin biosynthetic process"/>
    <property type="evidence" value="ECO:0007669"/>
    <property type="project" value="TreeGrafter"/>
</dbReference>
<dbReference type="GO" id="GO:0009448">
    <property type="term" value="P:gamma-aminobutyric acid metabolic process"/>
    <property type="evidence" value="ECO:0007669"/>
    <property type="project" value="TreeGrafter"/>
</dbReference>
<dbReference type="CDD" id="cd00610">
    <property type="entry name" value="OAT_like"/>
    <property type="match status" value="1"/>
</dbReference>
<dbReference type="FunFam" id="3.40.640.10:FF:000014">
    <property type="entry name" value="Adenosylmethionine-8-amino-7-oxononanoate aminotransferase, probable"/>
    <property type="match status" value="1"/>
</dbReference>
<dbReference type="FunFam" id="3.90.1150.10:FF:000280">
    <property type="entry name" value="Class III aminotransferase"/>
    <property type="match status" value="1"/>
</dbReference>
<dbReference type="Gene3D" id="3.90.1150.10">
    <property type="entry name" value="Aspartate Aminotransferase, domain 1"/>
    <property type="match status" value="1"/>
</dbReference>
<dbReference type="Gene3D" id="3.40.640.10">
    <property type="entry name" value="Type I PLP-dependent aspartate aminotransferase-like (Major domain)"/>
    <property type="match status" value="1"/>
</dbReference>
<dbReference type="InterPro" id="IPR005814">
    <property type="entry name" value="Aminotrans_3"/>
</dbReference>
<dbReference type="InterPro" id="IPR049704">
    <property type="entry name" value="Aminotrans_3_PPA_site"/>
</dbReference>
<dbReference type="InterPro" id="IPR015424">
    <property type="entry name" value="PyrdxlP-dep_Trfase"/>
</dbReference>
<dbReference type="InterPro" id="IPR015421">
    <property type="entry name" value="PyrdxlP-dep_Trfase_major"/>
</dbReference>
<dbReference type="InterPro" id="IPR015422">
    <property type="entry name" value="PyrdxlP-dep_Trfase_small"/>
</dbReference>
<dbReference type="NCBIfam" id="NF004767">
    <property type="entry name" value="PRK06105.1"/>
    <property type="match status" value="1"/>
</dbReference>
<dbReference type="PANTHER" id="PTHR42684">
    <property type="entry name" value="ADENOSYLMETHIONINE-8-AMINO-7-OXONONANOATE AMINOTRANSFERASE"/>
    <property type="match status" value="1"/>
</dbReference>
<dbReference type="PANTHER" id="PTHR42684:SF20">
    <property type="entry name" value="GAMMA-AMINOBUTYRATE TRANSAMINASE 1, MITOCHONDRIAL"/>
    <property type="match status" value="1"/>
</dbReference>
<dbReference type="Pfam" id="PF00202">
    <property type="entry name" value="Aminotran_3"/>
    <property type="match status" value="1"/>
</dbReference>
<dbReference type="SUPFAM" id="SSF53383">
    <property type="entry name" value="PLP-dependent transferases"/>
    <property type="match status" value="1"/>
</dbReference>
<dbReference type="PROSITE" id="PS00600">
    <property type="entry name" value="AA_TRANSFER_CLASS_3"/>
    <property type="match status" value="1"/>
</dbReference>
<evidence type="ECO:0000250" key="1"/>
<evidence type="ECO:0000255" key="2"/>
<evidence type="ECO:0000256" key="3">
    <source>
        <dbReference type="SAM" id="MobiDB-lite"/>
    </source>
</evidence>
<evidence type="ECO:0000305" key="4"/>
<name>GATP1_ORYSI</name>
<comment type="function">
    <text evidence="1">Transaminase that degrades gamma-amino butyric acid (GABA) and uses pyruvate as amino-group acceptor, but not 2-oxoglutarate.</text>
</comment>
<comment type="catalytic activity">
    <reaction>
        <text>4-aminobutanoate + pyruvate = succinate semialdehyde + L-alanine</text>
        <dbReference type="Rhea" id="RHEA:32263"/>
        <dbReference type="ChEBI" id="CHEBI:15361"/>
        <dbReference type="ChEBI" id="CHEBI:57706"/>
        <dbReference type="ChEBI" id="CHEBI:57972"/>
        <dbReference type="ChEBI" id="CHEBI:59888"/>
        <dbReference type="EC" id="2.6.1.96"/>
    </reaction>
</comment>
<comment type="catalytic activity">
    <reaction>
        <text>4-aminobutanoate + glyoxylate = succinate semialdehyde + glycine</text>
        <dbReference type="Rhea" id="RHEA:32267"/>
        <dbReference type="ChEBI" id="CHEBI:36655"/>
        <dbReference type="ChEBI" id="CHEBI:57305"/>
        <dbReference type="ChEBI" id="CHEBI:57706"/>
        <dbReference type="ChEBI" id="CHEBI:59888"/>
        <dbReference type="EC" id="2.6.1.96"/>
    </reaction>
</comment>
<comment type="subcellular location">
    <subcellularLocation>
        <location evidence="4">Mitochondrion</location>
    </subcellularLocation>
</comment>
<comment type="similarity">
    <text evidence="4">Belongs to the class-III pyridoxal-phosphate-dependent aminotransferase family.</text>
</comment>
<comment type="sequence caution" evidence="4">
    <conflict type="erroneous gene model prediction">
        <sequence resource="EMBL-CDS" id="EEC77995"/>
    </conflict>
</comment>
<gene>
    <name type="ORF">OsI_17385</name>
    <name type="ORF">OSIGBa0126B18.7</name>
</gene>
<accession>Q01K11</accession>
<accession>B8AU59</accession>
<protein>
    <recommendedName>
        <fullName>Gamma-aminobutyrate transaminase 1, mitochondrial</fullName>
        <ecNumber>2.6.1.96</ecNumber>
    </recommendedName>
</protein>
<sequence length="516" mass="56370">MVIARGLLRSNASSSSSQAINLLKYVTSTGSLQGHTQNLCDASTRHFSSVPSPQSNSTEENGFKGHGMLAPFTAGWQSTDVHPLVIERSEGSYVYDIDGKKYLDSLAGLWCTALGGSEPRLAKAATEQLHKLPFYHSFWNRTTKPSLDLAKELLSMFTAREMGKVFFTNSGSEANDSQVKLVWYYNNALGRPDKKKFIARSKSYHGSTLISASLSGLPALHQKFDLPAPFVLHTDCPHYWRFHLPGETEEEFATRLANNLEELILKEGPETIAAFIAEPVMGAGGVIPPPKTYFEKVQAIVKKYDILFIADEVITAFGRLGTMFGSDMYNIKPDLVSMAKALSSAYVPIGAIMVSPEISDVIHSQSNKLGSFAHGFTYSGHPVACAVAIEALKIYQERNIPDHVKQISPRFQEGVKAFAGSPIVGEIRGVGLILGTEFADNKSPNDPFPAEWGVGAIFGAECQKRGMLVRVAGDNIMMSPPLIMTPDEVEELVSIYGDALKATEERVAELKSKKNN</sequence>
<feature type="transit peptide" description="Mitochondrion" evidence="2">
    <location>
        <begin position="1"/>
        <end position="47"/>
    </location>
</feature>
<feature type="chain" id="PRO_0000416849" description="Gamma-aminobutyrate transaminase 1, mitochondrial">
    <location>
        <begin position="48"/>
        <end position="516"/>
    </location>
</feature>
<feature type="region of interest" description="Disordered" evidence="3">
    <location>
        <begin position="45"/>
        <end position="64"/>
    </location>
</feature>
<feature type="compositionally biased region" description="Polar residues" evidence="3">
    <location>
        <begin position="45"/>
        <end position="60"/>
    </location>
</feature>
<feature type="binding site" evidence="1">
    <location>
        <begin position="171"/>
        <end position="172"/>
    </location>
    <ligand>
        <name>pyridoxal 5'-phosphate</name>
        <dbReference type="ChEBI" id="CHEBI:597326"/>
    </ligand>
</feature>
<feature type="binding site" evidence="1">
    <location>
        <position position="204"/>
    </location>
    <ligand>
        <name>substrate</name>
    </ligand>
</feature>
<feature type="binding site" evidence="1">
    <location>
        <position position="311"/>
    </location>
    <ligand>
        <name>pyridoxal 5'-phosphate</name>
        <dbReference type="ChEBI" id="CHEBI:597326"/>
    </ligand>
</feature>
<feature type="binding site" evidence="1">
    <location>
        <position position="340"/>
    </location>
    <ligand>
        <name>substrate</name>
    </ligand>
</feature>
<feature type="modified residue" description="N6-(pyridoxal phosphate)lysine" evidence="1">
    <location>
        <position position="340"/>
    </location>
</feature>
<reference key="1">
    <citation type="journal article" date="2002" name="Nature">
        <title>Sequence and analysis of rice chromosome 4.</title>
        <authorList>
            <person name="Feng Q."/>
            <person name="Zhang Y."/>
            <person name="Hao P."/>
            <person name="Wang S."/>
            <person name="Fu G."/>
            <person name="Huang Y."/>
            <person name="Li Y."/>
            <person name="Zhu J."/>
            <person name="Liu Y."/>
            <person name="Hu X."/>
            <person name="Jia P."/>
            <person name="Zhang Y."/>
            <person name="Zhao Q."/>
            <person name="Ying K."/>
            <person name="Yu S."/>
            <person name="Tang Y."/>
            <person name="Weng Q."/>
            <person name="Zhang L."/>
            <person name="Lu Y."/>
            <person name="Mu J."/>
            <person name="Lu Y."/>
            <person name="Zhang L.S."/>
            <person name="Yu Z."/>
            <person name="Fan D."/>
            <person name="Liu X."/>
            <person name="Lu T."/>
            <person name="Li C."/>
            <person name="Wu Y."/>
            <person name="Sun T."/>
            <person name="Lei H."/>
            <person name="Li T."/>
            <person name="Hu H."/>
            <person name="Guan J."/>
            <person name="Wu M."/>
            <person name="Zhang R."/>
            <person name="Zhou B."/>
            <person name="Chen Z."/>
            <person name="Chen L."/>
            <person name="Jin Z."/>
            <person name="Wang R."/>
            <person name="Yin H."/>
            <person name="Cai Z."/>
            <person name="Ren S."/>
            <person name="Lv G."/>
            <person name="Gu W."/>
            <person name="Zhu G."/>
            <person name="Tu Y."/>
            <person name="Jia J."/>
            <person name="Zhang Y."/>
            <person name="Chen J."/>
            <person name="Kang H."/>
            <person name="Chen X."/>
            <person name="Shao C."/>
            <person name="Sun Y."/>
            <person name="Hu Q."/>
            <person name="Zhang X."/>
            <person name="Zhang W."/>
            <person name="Wang L."/>
            <person name="Ding C."/>
            <person name="Sheng H."/>
            <person name="Gu J."/>
            <person name="Chen S."/>
            <person name="Ni L."/>
            <person name="Zhu F."/>
            <person name="Chen W."/>
            <person name="Lan L."/>
            <person name="Lai Y."/>
            <person name="Cheng Z."/>
            <person name="Gu M."/>
            <person name="Jiang J."/>
            <person name="Li J."/>
            <person name="Hong G."/>
            <person name="Xue Y."/>
            <person name="Han B."/>
        </authorList>
    </citation>
    <scope>NUCLEOTIDE SEQUENCE [LARGE SCALE GENOMIC DNA]</scope>
    <source>
        <strain>cv. Guang-Lu-Ai No.4</strain>
    </source>
</reference>
<reference key="2">
    <citation type="journal article" date="2005" name="PLoS Biol.">
        <title>The genomes of Oryza sativa: a history of duplications.</title>
        <authorList>
            <person name="Yu J."/>
            <person name="Wang J."/>
            <person name="Lin W."/>
            <person name="Li S."/>
            <person name="Li H."/>
            <person name="Zhou J."/>
            <person name="Ni P."/>
            <person name="Dong W."/>
            <person name="Hu S."/>
            <person name="Zeng C."/>
            <person name="Zhang J."/>
            <person name="Zhang Y."/>
            <person name="Li R."/>
            <person name="Xu Z."/>
            <person name="Li S."/>
            <person name="Li X."/>
            <person name="Zheng H."/>
            <person name="Cong L."/>
            <person name="Lin L."/>
            <person name="Yin J."/>
            <person name="Geng J."/>
            <person name="Li G."/>
            <person name="Shi J."/>
            <person name="Liu J."/>
            <person name="Lv H."/>
            <person name="Li J."/>
            <person name="Wang J."/>
            <person name="Deng Y."/>
            <person name="Ran L."/>
            <person name="Shi X."/>
            <person name="Wang X."/>
            <person name="Wu Q."/>
            <person name="Li C."/>
            <person name="Ren X."/>
            <person name="Wang J."/>
            <person name="Wang X."/>
            <person name="Li D."/>
            <person name="Liu D."/>
            <person name="Zhang X."/>
            <person name="Ji Z."/>
            <person name="Zhao W."/>
            <person name="Sun Y."/>
            <person name="Zhang Z."/>
            <person name="Bao J."/>
            <person name="Han Y."/>
            <person name="Dong L."/>
            <person name="Ji J."/>
            <person name="Chen P."/>
            <person name="Wu S."/>
            <person name="Liu J."/>
            <person name="Xiao Y."/>
            <person name="Bu D."/>
            <person name="Tan J."/>
            <person name="Yang L."/>
            <person name="Ye C."/>
            <person name="Zhang J."/>
            <person name="Xu J."/>
            <person name="Zhou Y."/>
            <person name="Yu Y."/>
            <person name="Zhang B."/>
            <person name="Zhuang S."/>
            <person name="Wei H."/>
            <person name="Liu B."/>
            <person name="Lei M."/>
            <person name="Yu H."/>
            <person name="Li Y."/>
            <person name="Xu H."/>
            <person name="Wei S."/>
            <person name="He X."/>
            <person name="Fang L."/>
            <person name="Zhang Z."/>
            <person name="Zhang Y."/>
            <person name="Huang X."/>
            <person name="Su Z."/>
            <person name="Tong W."/>
            <person name="Li J."/>
            <person name="Tong Z."/>
            <person name="Li S."/>
            <person name="Ye J."/>
            <person name="Wang L."/>
            <person name="Fang L."/>
            <person name="Lei T."/>
            <person name="Chen C.-S."/>
            <person name="Chen H.-C."/>
            <person name="Xu Z."/>
            <person name="Li H."/>
            <person name="Huang H."/>
            <person name="Zhang F."/>
            <person name="Xu H."/>
            <person name="Li N."/>
            <person name="Zhao C."/>
            <person name="Li S."/>
            <person name="Dong L."/>
            <person name="Huang Y."/>
            <person name="Li L."/>
            <person name="Xi Y."/>
            <person name="Qi Q."/>
            <person name="Li W."/>
            <person name="Zhang B."/>
            <person name="Hu W."/>
            <person name="Zhang Y."/>
            <person name="Tian X."/>
            <person name="Jiao Y."/>
            <person name="Liang X."/>
            <person name="Jin J."/>
            <person name="Gao L."/>
            <person name="Zheng W."/>
            <person name="Hao B."/>
            <person name="Liu S.-M."/>
            <person name="Wang W."/>
            <person name="Yuan L."/>
            <person name="Cao M."/>
            <person name="McDermott J."/>
            <person name="Samudrala R."/>
            <person name="Wang J."/>
            <person name="Wong G.K.-S."/>
            <person name="Yang H."/>
        </authorList>
    </citation>
    <scope>NUCLEOTIDE SEQUENCE [LARGE SCALE GENOMIC DNA]</scope>
    <source>
        <strain>cv. 93-11</strain>
    </source>
</reference>
<organism>
    <name type="scientific">Oryza sativa subsp. indica</name>
    <name type="common">Rice</name>
    <dbReference type="NCBI Taxonomy" id="39946"/>
    <lineage>
        <taxon>Eukaryota</taxon>
        <taxon>Viridiplantae</taxon>
        <taxon>Streptophyta</taxon>
        <taxon>Embryophyta</taxon>
        <taxon>Tracheophyta</taxon>
        <taxon>Spermatophyta</taxon>
        <taxon>Magnoliopsida</taxon>
        <taxon>Liliopsida</taxon>
        <taxon>Poales</taxon>
        <taxon>Poaceae</taxon>
        <taxon>BOP clade</taxon>
        <taxon>Oryzoideae</taxon>
        <taxon>Oryzeae</taxon>
        <taxon>Oryzinae</taxon>
        <taxon>Oryza</taxon>
        <taxon>Oryza sativa</taxon>
    </lineage>
</organism>